<organism>
    <name type="scientific">Synechocystis sp. (strain ATCC 27184 / PCC 6803 / Kazusa)</name>
    <dbReference type="NCBI Taxonomy" id="1111708"/>
    <lineage>
        <taxon>Bacteria</taxon>
        <taxon>Bacillati</taxon>
        <taxon>Cyanobacteriota</taxon>
        <taxon>Cyanophyceae</taxon>
        <taxon>Synechococcales</taxon>
        <taxon>Merismopediaceae</taxon>
        <taxon>Synechocystis</taxon>
    </lineage>
</organism>
<gene>
    <name type="ordered locus">ssl3177</name>
</gene>
<keyword id="KW-1185">Reference proteome</keyword>
<accession>P73455</accession>
<comment type="similarity">
    <text evidence="1">To E.coli RlpA.</text>
</comment>
<protein>
    <recommendedName>
        <fullName>Uncharacterized protein ssl3177</fullName>
    </recommendedName>
</protein>
<evidence type="ECO:0000305" key="1"/>
<feature type="chain" id="PRO_0000157902" description="Uncharacterized protein ssl3177">
    <location>
        <begin position="1"/>
        <end position="90"/>
    </location>
</feature>
<sequence length="90" mass="9920">MMAQSATFYGNQFVGRKMANGQVYNHGRMVAAHPSLPLGTRVRVTNRRTGKSVVVTVSDRCNCSIDLSRSAFQQIANPRKGRVPVSITRL</sequence>
<proteinExistence type="predicted"/>
<dbReference type="EMBL" id="BA000022">
    <property type="protein sequence ID" value="BAA17495.1"/>
    <property type="molecule type" value="Genomic_DNA"/>
</dbReference>
<dbReference type="PIR" id="S77392">
    <property type="entry name" value="S77392"/>
</dbReference>
<dbReference type="SMR" id="P73455"/>
<dbReference type="IntAct" id="P73455">
    <property type="interactions" value="2"/>
</dbReference>
<dbReference type="STRING" id="1148.gene:10498360"/>
<dbReference type="PaxDb" id="1148-1652574"/>
<dbReference type="EnsemblBacteria" id="BAA17495">
    <property type="protein sequence ID" value="BAA17495"/>
    <property type="gene ID" value="BAA17495"/>
</dbReference>
<dbReference type="KEGG" id="syn:ssl3177"/>
<dbReference type="eggNOG" id="COG0797">
    <property type="taxonomic scope" value="Bacteria"/>
</dbReference>
<dbReference type="InParanoid" id="P73455"/>
<dbReference type="PhylomeDB" id="P73455"/>
<dbReference type="Proteomes" id="UP000001425">
    <property type="component" value="Chromosome"/>
</dbReference>
<dbReference type="CDD" id="cd22268">
    <property type="entry name" value="DPBB_RlpA-like"/>
    <property type="match status" value="1"/>
</dbReference>
<dbReference type="Gene3D" id="2.40.40.10">
    <property type="entry name" value="RlpA-like domain"/>
    <property type="match status" value="1"/>
</dbReference>
<dbReference type="InterPro" id="IPR009009">
    <property type="entry name" value="RlpA-like_DPBB"/>
</dbReference>
<dbReference type="InterPro" id="IPR036908">
    <property type="entry name" value="RlpA-like_sf"/>
</dbReference>
<dbReference type="PANTHER" id="PTHR34183">
    <property type="entry name" value="ENDOLYTIC PEPTIDOGLYCAN TRANSGLYCOSYLASE RLPA"/>
    <property type="match status" value="1"/>
</dbReference>
<dbReference type="PANTHER" id="PTHR34183:SF8">
    <property type="entry name" value="ENDOLYTIC PEPTIDOGLYCAN TRANSGLYCOSYLASE RLPA-RELATED"/>
    <property type="match status" value="1"/>
</dbReference>
<dbReference type="Pfam" id="PF03330">
    <property type="entry name" value="DPBB_1"/>
    <property type="match status" value="1"/>
</dbReference>
<dbReference type="SUPFAM" id="SSF50685">
    <property type="entry name" value="Barwin-like endoglucanases"/>
    <property type="match status" value="1"/>
</dbReference>
<reference key="1">
    <citation type="journal article" date="1996" name="DNA Res.">
        <title>Sequence analysis of the genome of the unicellular cyanobacterium Synechocystis sp. strain PCC6803. II. Sequence determination of the entire genome and assignment of potential protein-coding regions.</title>
        <authorList>
            <person name="Kaneko T."/>
            <person name="Sato S."/>
            <person name="Kotani H."/>
            <person name="Tanaka A."/>
            <person name="Asamizu E."/>
            <person name="Nakamura Y."/>
            <person name="Miyajima N."/>
            <person name="Hirosawa M."/>
            <person name="Sugiura M."/>
            <person name="Sasamoto S."/>
            <person name="Kimura T."/>
            <person name="Hosouchi T."/>
            <person name="Matsuno A."/>
            <person name="Muraki A."/>
            <person name="Nakazaki N."/>
            <person name="Naruo K."/>
            <person name="Okumura S."/>
            <person name="Shimpo S."/>
            <person name="Takeuchi C."/>
            <person name="Wada T."/>
            <person name="Watanabe A."/>
            <person name="Yamada M."/>
            <person name="Yasuda M."/>
            <person name="Tabata S."/>
        </authorList>
    </citation>
    <scope>NUCLEOTIDE SEQUENCE [LARGE SCALE GENOMIC DNA]</scope>
    <source>
        <strain>ATCC 27184 / PCC 6803 / Kazusa</strain>
    </source>
</reference>
<name>Y3177_SYNY3</name>